<name>HXC5_NOTVI</name>
<organism>
    <name type="scientific">Notophthalmus viridescens</name>
    <name type="common">Eastern newt</name>
    <name type="synonym">Triturus viridescens</name>
    <dbReference type="NCBI Taxonomy" id="8316"/>
    <lineage>
        <taxon>Eukaryota</taxon>
        <taxon>Metazoa</taxon>
        <taxon>Chordata</taxon>
        <taxon>Craniata</taxon>
        <taxon>Vertebrata</taxon>
        <taxon>Euteleostomi</taxon>
        <taxon>Amphibia</taxon>
        <taxon>Batrachia</taxon>
        <taxon>Caudata</taxon>
        <taxon>Salamandroidea</taxon>
        <taxon>Salamandridae</taxon>
        <taxon>Pleurodelinae</taxon>
        <taxon>Notophthalmus</taxon>
    </lineage>
</organism>
<accession>P31262</accession>
<comment type="function">
    <text>Sequence-specific transcription factor which is part of a developmental regulatory system that provides cells with specific positional identities on the anterior-posterior axis.</text>
</comment>
<comment type="subcellular location">
    <subcellularLocation>
        <location>Nucleus</location>
    </subcellularLocation>
</comment>
<comment type="similarity">
    <text evidence="2">Belongs to the Antp homeobox family.</text>
</comment>
<comment type="sequence caution" evidence="2">
    <conflict type="erroneous initiation">
        <sequence resource="EMBL-CDS" id="AAA49397"/>
    </conflict>
</comment>
<keyword id="KW-0217">Developmental protein</keyword>
<keyword id="KW-0238">DNA-binding</keyword>
<keyword id="KW-0371">Homeobox</keyword>
<keyword id="KW-0539">Nucleus</keyword>
<keyword id="KW-0804">Transcription</keyword>
<keyword id="KW-0805">Transcription regulation</keyword>
<sequence length="71" mass="8979">ETDGKRSRTSYTRYQTLELEKEFHFNRYLTRRRRIEIANNLCLNERQIKIWFQNRRMKWKKDSKLKIKDSL</sequence>
<reference key="1">
    <citation type="journal article" date="1992" name="Gene">
        <title>Homeobox-containing genes in the newt are organized in clusters similar to other vertebrates.</title>
        <authorList>
            <person name="Belleville S."/>
            <person name="Beauchemin M."/>
            <person name="Tremblay M."/>
            <person name="Noiseux N."/>
            <person name="Savard P."/>
        </authorList>
    </citation>
    <scope>NUCLEOTIDE SEQUENCE [GENOMIC DNA]</scope>
</reference>
<evidence type="ECO:0000255" key="1">
    <source>
        <dbReference type="PROSITE-ProRule" id="PRU00108"/>
    </source>
</evidence>
<evidence type="ECO:0000305" key="2"/>
<protein>
    <recommendedName>
        <fullName>Homeobox protein Hox-C5</fullName>
    </recommendedName>
    <alternativeName>
        <fullName>Homeobox protein Hbox-3.4</fullName>
        <shortName>NvHbox-3.4</shortName>
    </alternativeName>
</protein>
<proteinExistence type="inferred from homology"/>
<dbReference type="EMBL" id="M84001">
    <property type="protein sequence ID" value="AAA49397.1"/>
    <property type="status" value="ALT_INIT"/>
    <property type="molecule type" value="Genomic_DNA"/>
</dbReference>
<dbReference type="PIR" id="JC1161">
    <property type="entry name" value="JC1161"/>
</dbReference>
<dbReference type="SMR" id="P31262"/>
<dbReference type="GO" id="GO:0005634">
    <property type="term" value="C:nucleus"/>
    <property type="evidence" value="ECO:0007669"/>
    <property type="project" value="UniProtKB-SubCell"/>
</dbReference>
<dbReference type="GO" id="GO:0000981">
    <property type="term" value="F:DNA-binding transcription factor activity, RNA polymerase II-specific"/>
    <property type="evidence" value="ECO:0007669"/>
    <property type="project" value="InterPro"/>
</dbReference>
<dbReference type="GO" id="GO:0000978">
    <property type="term" value="F:RNA polymerase II cis-regulatory region sequence-specific DNA binding"/>
    <property type="evidence" value="ECO:0007669"/>
    <property type="project" value="TreeGrafter"/>
</dbReference>
<dbReference type="GO" id="GO:0009952">
    <property type="term" value="P:anterior/posterior pattern specification"/>
    <property type="evidence" value="ECO:0007669"/>
    <property type="project" value="TreeGrafter"/>
</dbReference>
<dbReference type="CDD" id="cd00086">
    <property type="entry name" value="homeodomain"/>
    <property type="match status" value="1"/>
</dbReference>
<dbReference type="FunFam" id="1.10.10.60:FF:000055">
    <property type="entry name" value="Homeobox protein Hox-A5"/>
    <property type="match status" value="1"/>
</dbReference>
<dbReference type="Gene3D" id="1.10.10.60">
    <property type="entry name" value="Homeodomain-like"/>
    <property type="match status" value="1"/>
</dbReference>
<dbReference type="InterPro" id="IPR050296">
    <property type="entry name" value="Antp_homeobox"/>
</dbReference>
<dbReference type="InterPro" id="IPR001356">
    <property type="entry name" value="HD"/>
</dbReference>
<dbReference type="InterPro" id="IPR020479">
    <property type="entry name" value="HD_metazoa"/>
</dbReference>
<dbReference type="InterPro" id="IPR017970">
    <property type="entry name" value="Homeobox_CS"/>
</dbReference>
<dbReference type="InterPro" id="IPR009057">
    <property type="entry name" value="Homeodomain-like_sf"/>
</dbReference>
<dbReference type="PANTHER" id="PTHR45659">
    <property type="entry name" value="HOMEOBOX PROTEIN HOX"/>
    <property type="match status" value="1"/>
</dbReference>
<dbReference type="PANTHER" id="PTHR45659:SF10">
    <property type="entry name" value="HOMEOBOX PROTEIN HOX-A5"/>
    <property type="match status" value="1"/>
</dbReference>
<dbReference type="Pfam" id="PF00046">
    <property type="entry name" value="Homeodomain"/>
    <property type="match status" value="1"/>
</dbReference>
<dbReference type="PRINTS" id="PR00024">
    <property type="entry name" value="HOMEOBOX"/>
</dbReference>
<dbReference type="SMART" id="SM00389">
    <property type="entry name" value="HOX"/>
    <property type="match status" value="1"/>
</dbReference>
<dbReference type="SUPFAM" id="SSF46689">
    <property type="entry name" value="Homeodomain-like"/>
    <property type="match status" value="1"/>
</dbReference>
<dbReference type="PROSITE" id="PS00027">
    <property type="entry name" value="HOMEOBOX_1"/>
    <property type="match status" value="1"/>
</dbReference>
<dbReference type="PROSITE" id="PS50071">
    <property type="entry name" value="HOMEOBOX_2"/>
    <property type="match status" value="1"/>
</dbReference>
<feature type="chain" id="PRO_0000200172" description="Homeobox protein Hox-C5">
    <location>
        <begin position="1" status="less than"/>
        <end position="71" status="greater than"/>
    </location>
</feature>
<feature type="DNA-binding region" description="Homeobox" evidence="1">
    <location>
        <begin position="4"/>
        <end position="63"/>
    </location>
</feature>
<feature type="non-terminal residue">
    <location>
        <position position="1"/>
    </location>
</feature>
<feature type="non-terminal residue">
    <location>
        <position position="71"/>
    </location>
</feature>